<name>HDDC2_MOUSE</name>
<organism>
    <name type="scientific">Mus musculus</name>
    <name type="common">Mouse</name>
    <dbReference type="NCBI Taxonomy" id="10090"/>
    <lineage>
        <taxon>Eukaryota</taxon>
        <taxon>Metazoa</taxon>
        <taxon>Chordata</taxon>
        <taxon>Craniata</taxon>
        <taxon>Vertebrata</taxon>
        <taxon>Euteleostomi</taxon>
        <taxon>Mammalia</taxon>
        <taxon>Eutheria</taxon>
        <taxon>Euarchontoglires</taxon>
        <taxon>Glires</taxon>
        <taxon>Rodentia</taxon>
        <taxon>Myomorpha</taxon>
        <taxon>Muroidea</taxon>
        <taxon>Muridae</taxon>
        <taxon>Murinae</taxon>
        <taxon>Mus</taxon>
        <taxon>Mus</taxon>
    </lineage>
</organism>
<accession>Q3SXD3</accession>
<accession>Q9CV20</accession>
<gene>
    <name type="primary">Hddc2</name>
</gene>
<sequence>MALASSGSGAGLLRFLRLVGQLKRVPRTGWVYRNVEKPESVSDHMYRMAVMAMVTRDDRLNKDRCIRLALVHDMAECIVGDIAPADNIPKEEKHRREEEAMKQITQLLPEDLRKELYELWEEYETQSSEEAKFVKQLDQCEMILQASEYEDLENKPGRLQDFYDSTAGKFSHPEIVQLVSELETERNASMATASAEPGS</sequence>
<proteinExistence type="evidence at protein level"/>
<evidence type="ECO:0000250" key="1">
    <source>
        <dbReference type="UniProtKB" id="P53144"/>
    </source>
</evidence>
<evidence type="ECO:0000250" key="2">
    <source>
        <dbReference type="UniProtKB" id="Q7Z4H3"/>
    </source>
</evidence>
<evidence type="ECO:0000255" key="3">
    <source>
        <dbReference type="PROSITE-ProRule" id="PRU01175"/>
    </source>
</evidence>
<evidence type="ECO:0000305" key="4"/>
<comment type="function">
    <text evidence="1">Catalyzes the dephosphorylation of the nucleoside 5'-monophosphates deoxyadenosine monophosphate (dAMP), deoxycytidine monophosphate (dCMP), deoxyguanosine monophosphate (dGMP) and deoxythymidine monophosphate (dTMP).</text>
</comment>
<comment type="catalytic activity">
    <reaction evidence="1">
        <text>a 2'-deoxyribonucleoside 5'-phosphate + H2O = a 2'-deoxyribonucleoside + phosphate</text>
        <dbReference type="Rhea" id="RHEA:36167"/>
        <dbReference type="ChEBI" id="CHEBI:15377"/>
        <dbReference type="ChEBI" id="CHEBI:18274"/>
        <dbReference type="ChEBI" id="CHEBI:43474"/>
        <dbReference type="ChEBI" id="CHEBI:65317"/>
        <dbReference type="EC" id="3.1.3.89"/>
    </reaction>
</comment>
<comment type="cofactor">
    <cofactor evidence="1">
        <name>Mn(2+)</name>
        <dbReference type="ChEBI" id="CHEBI:29035"/>
    </cofactor>
    <cofactor evidence="1">
        <name>Co(2+)</name>
        <dbReference type="ChEBI" id="CHEBI:48828"/>
    </cofactor>
    <cofactor evidence="1">
        <name>Mg(2+)</name>
        <dbReference type="ChEBI" id="CHEBI:18420"/>
    </cofactor>
    <text evidence="1 2">Binds 2 divalent metal cations (By similarity). Shows activity with Mn(2+), Co(2+) and Mg(2+) but shows no activity with Zn(2+) (By similarity).</text>
</comment>
<comment type="subunit">
    <text evidence="1">Homodimer.</text>
</comment>
<comment type="similarity">
    <text evidence="4">Belongs to the HDDC2 family.</text>
</comment>
<keyword id="KW-0007">Acetylation</keyword>
<keyword id="KW-0378">Hydrolase</keyword>
<keyword id="KW-0460">Magnesium</keyword>
<keyword id="KW-0479">Metal-binding</keyword>
<keyword id="KW-0597">Phosphoprotein</keyword>
<keyword id="KW-1185">Reference proteome</keyword>
<protein>
    <recommendedName>
        <fullName evidence="4">5'-deoxynucleotidase HDDC2</fullName>
        <ecNumber evidence="1">3.1.3.89</ecNumber>
    </recommendedName>
    <alternativeName>
        <fullName>HD domain-containing protein 2</fullName>
    </alternativeName>
</protein>
<dbReference type="EC" id="3.1.3.89" evidence="1"/>
<dbReference type="EMBL" id="BC104360">
    <property type="protein sequence ID" value="AAI04361.1"/>
    <property type="molecule type" value="mRNA"/>
</dbReference>
<dbReference type="EMBL" id="BC104361">
    <property type="protein sequence ID" value="AAI04362.1"/>
    <property type="molecule type" value="mRNA"/>
</dbReference>
<dbReference type="EMBL" id="AK009957">
    <property type="protein sequence ID" value="BAB26609.1"/>
    <property type="molecule type" value="mRNA"/>
</dbReference>
<dbReference type="CCDS" id="CCDS23767.1"/>
<dbReference type="RefSeq" id="NP_081444.1">
    <property type="nucleotide sequence ID" value="NM_027168.2"/>
</dbReference>
<dbReference type="SMR" id="Q3SXD3"/>
<dbReference type="BioGRID" id="213617">
    <property type="interactions" value="5"/>
</dbReference>
<dbReference type="FunCoup" id="Q3SXD3">
    <property type="interactions" value="1652"/>
</dbReference>
<dbReference type="STRING" id="10090.ENSMUSP00000000304"/>
<dbReference type="GlyGen" id="Q3SXD3">
    <property type="glycosylation" value="1 site, 1 N-linked glycan (1 site)"/>
</dbReference>
<dbReference type="PhosphoSitePlus" id="Q3SXD3"/>
<dbReference type="PaxDb" id="10090-ENSMUSP00000000304"/>
<dbReference type="PeptideAtlas" id="Q3SXD3"/>
<dbReference type="ProteomicsDB" id="270953"/>
<dbReference type="Pumba" id="Q3SXD3"/>
<dbReference type="Antibodypedia" id="32696">
    <property type="antibodies" value="53 antibodies from 18 providers"/>
</dbReference>
<dbReference type="Ensembl" id="ENSMUST00000000304.14">
    <property type="protein sequence ID" value="ENSMUSP00000000304.7"/>
    <property type="gene ID" value="ENSMUSG00000000295.14"/>
</dbReference>
<dbReference type="GeneID" id="69692"/>
<dbReference type="UCSC" id="uc007etq.1">
    <property type="organism name" value="mouse"/>
</dbReference>
<dbReference type="AGR" id="MGI:1916942"/>
<dbReference type="CTD" id="51020"/>
<dbReference type="MGI" id="MGI:1916942">
    <property type="gene designation" value="Hddc2"/>
</dbReference>
<dbReference type="VEuPathDB" id="HostDB:ENSMUSG00000000295"/>
<dbReference type="eggNOG" id="KOG3197">
    <property type="taxonomic scope" value="Eukaryota"/>
</dbReference>
<dbReference type="GeneTree" id="ENSGT00390000009937"/>
<dbReference type="HOGENOM" id="CLU_039453_2_1_1"/>
<dbReference type="InParanoid" id="Q3SXD3"/>
<dbReference type="OMA" id="TWRLCLM"/>
<dbReference type="OrthoDB" id="10254258at2759"/>
<dbReference type="PhylomeDB" id="Q3SXD3"/>
<dbReference type="TreeFam" id="TF313855"/>
<dbReference type="BioGRID-ORCS" id="69692">
    <property type="hits" value="1 hit in 76 CRISPR screens"/>
</dbReference>
<dbReference type="ChiTaRS" id="Hddc2">
    <property type="organism name" value="mouse"/>
</dbReference>
<dbReference type="PRO" id="PR:Q3SXD3"/>
<dbReference type="Proteomes" id="UP000000589">
    <property type="component" value="Chromosome 10"/>
</dbReference>
<dbReference type="RNAct" id="Q3SXD3">
    <property type="molecule type" value="protein"/>
</dbReference>
<dbReference type="Bgee" id="ENSMUSG00000000295">
    <property type="expression patterns" value="Expressed in floor plate of midbrain and 257 other cell types or tissues"/>
</dbReference>
<dbReference type="ExpressionAtlas" id="Q3SXD3">
    <property type="expression patterns" value="baseline and differential"/>
</dbReference>
<dbReference type="GO" id="GO:0005739">
    <property type="term" value="C:mitochondrion"/>
    <property type="evidence" value="ECO:0007005"/>
    <property type="project" value="MGI"/>
</dbReference>
<dbReference type="GO" id="GO:0002953">
    <property type="term" value="F:5'-deoxynucleotidase activity"/>
    <property type="evidence" value="ECO:0007669"/>
    <property type="project" value="UniProtKB-EC"/>
</dbReference>
<dbReference type="GO" id="GO:0046872">
    <property type="term" value="F:metal ion binding"/>
    <property type="evidence" value="ECO:0007669"/>
    <property type="project" value="UniProtKB-KW"/>
</dbReference>
<dbReference type="FunFam" id="1.10.3210.10:FF:000011">
    <property type="entry name" value="HD domain-containing protein 2"/>
    <property type="match status" value="1"/>
</dbReference>
<dbReference type="Gene3D" id="1.10.3210.10">
    <property type="entry name" value="Hypothetical protein af1432"/>
    <property type="match status" value="1"/>
</dbReference>
<dbReference type="InterPro" id="IPR003607">
    <property type="entry name" value="HD/PDEase_dom"/>
</dbReference>
<dbReference type="InterPro" id="IPR006674">
    <property type="entry name" value="HD_domain"/>
</dbReference>
<dbReference type="InterPro" id="IPR039356">
    <property type="entry name" value="YfbR/HDDC2"/>
</dbReference>
<dbReference type="PANTHER" id="PTHR11845">
    <property type="entry name" value="5'-DEOXYNUCLEOTIDASE HDDC2"/>
    <property type="match status" value="1"/>
</dbReference>
<dbReference type="PANTHER" id="PTHR11845:SF13">
    <property type="entry name" value="5'-DEOXYNUCLEOTIDASE HDDC2"/>
    <property type="match status" value="1"/>
</dbReference>
<dbReference type="Pfam" id="PF13023">
    <property type="entry name" value="HD_3"/>
    <property type="match status" value="1"/>
</dbReference>
<dbReference type="SMART" id="SM00471">
    <property type="entry name" value="HDc"/>
    <property type="match status" value="1"/>
</dbReference>
<dbReference type="SUPFAM" id="SSF109604">
    <property type="entry name" value="HD-domain/PDEase-like"/>
    <property type="match status" value="1"/>
</dbReference>
<dbReference type="PROSITE" id="PS51831">
    <property type="entry name" value="HD"/>
    <property type="match status" value="1"/>
</dbReference>
<feature type="initiator methionine" description="Removed" evidence="2">
    <location>
        <position position="1"/>
    </location>
</feature>
<feature type="chain" id="PRO_0000311390" description="5'-deoxynucleotidase HDDC2">
    <location>
        <begin position="2"/>
        <end position="199"/>
    </location>
</feature>
<feature type="domain" description="HD" evidence="3">
    <location>
        <begin position="41"/>
        <end position="143"/>
    </location>
</feature>
<feature type="binding site" evidence="2">
    <location>
        <position position="44"/>
    </location>
    <ligand>
        <name>a divalent metal cation</name>
        <dbReference type="ChEBI" id="CHEBI:60240"/>
        <label>1</label>
    </ligand>
</feature>
<feature type="binding site" evidence="2">
    <location>
        <position position="72"/>
    </location>
    <ligand>
        <name>a divalent metal cation</name>
        <dbReference type="ChEBI" id="CHEBI:60240"/>
        <label>1</label>
    </ligand>
</feature>
<feature type="binding site" evidence="2">
    <location>
        <position position="73"/>
    </location>
    <ligand>
        <name>a divalent metal cation</name>
        <dbReference type="ChEBI" id="CHEBI:60240"/>
        <label>1</label>
    </ligand>
</feature>
<feature type="binding site" evidence="2">
    <location>
        <position position="76"/>
    </location>
    <ligand>
        <name>a divalent metal cation</name>
        <dbReference type="ChEBI" id="CHEBI:60240"/>
        <label>2</label>
    </ligand>
</feature>
<feature type="binding site" evidence="2">
    <location>
        <position position="81"/>
    </location>
    <ligand>
        <name>a divalent metal cation</name>
        <dbReference type="ChEBI" id="CHEBI:60240"/>
        <label>2</label>
    </ligand>
</feature>
<feature type="binding site" evidence="2">
    <location>
        <position position="82"/>
    </location>
    <ligand>
        <name>a divalent metal cation</name>
        <dbReference type="ChEBI" id="CHEBI:60240"/>
        <label>2</label>
    </ligand>
</feature>
<feature type="binding site" evidence="2">
    <location>
        <position position="138"/>
    </location>
    <ligand>
        <name>a divalent metal cation</name>
        <dbReference type="ChEBI" id="CHEBI:60240"/>
        <label>1</label>
    </ligand>
</feature>
<feature type="modified residue" description="N-acetylalanine" evidence="2">
    <location>
        <position position="2"/>
    </location>
</feature>
<feature type="modified residue" description="Phosphoserine" evidence="2">
    <location>
        <position position="5"/>
    </location>
</feature>
<feature type="modified residue" description="Phosphoserine" evidence="2">
    <location>
        <position position="199"/>
    </location>
</feature>
<reference key="1">
    <citation type="journal article" date="2004" name="Genome Res.">
        <title>The status, quality, and expansion of the NIH full-length cDNA project: the Mammalian Gene Collection (MGC).</title>
        <authorList>
            <consortium name="The MGC Project Team"/>
        </authorList>
    </citation>
    <scope>NUCLEOTIDE SEQUENCE [LARGE SCALE MRNA]</scope>
</reference>
<reference key="2">
    <citation type="journal article" date="2005" name="Science">
        <title>The transcriptional landscape of the mammalian genome.</title>
        <authorList>
            <person name="Carninci P."/>
            <person name="Kasukawa T."/>
            <person name="Katayama S."/>
            <person name="Gough J."/>
            <person name="Frith M.C."/>
            <person name="Maeda N."/>
            <person name="Oyama R."/>
            <person name="Ravasi T."/>
            <person name="Lenhard B."/>
            <person name="Wells C."/>
            <person name="Kodzius R."/>
            <person name="Shimokawa K."/>
            <person name="Bajic V.B."/>
            <person name="Brenner S.E."/>
            <person name="Batalov S."/>
            <person name="Forrest A.R."/>
            <person name="Zavolan M."/>
            <person name="Davis M.J."/>
            <person name="Wilming L.G."/>
            <person name="Aidinis V."/>
            <person name="Allen J.E."/>
            <person name="Ambesi-Impiombato A."/>
            <person name="Apweiler R."/>
            <person name="Aturaliya R.N."/>
            <person name="Bailey T.L."/>
            <person name="Bansal M."/>
            <person name="Baxter L."/>
            <person name="Beisel K.W."/>
            <person name="Bersano T."/>
            <person name="Bono H."/>
            <person name="Chalk A.M."/>
            <person name="Chiu K.P."/>
            <person name="Choudhary V."/>
            <person name="Christoffels A."/>
            <person name="Clutterbuck D.R."/>
            <person name="Crowe M.L."/>
            <person name="Dalla E."/>
            <person name="Dalrymple B.P."/>
            <person name="de Bono B."/>
            <person name="Della Gatta G."/>
            <person name="di Bernardo D."/>
            <person name="Down T."/>
            <person name="Engstrom P."/>
            <person name="Fagiolini M."/>
            <person name="Faulkner G."/>
            <person name="Fletcher C.F."/>
            <person name="Fukushima T."/>
            <person name="Furuno M."/>
            <person name="Futaki S."/>
            <person name="Gariboldi M."/>
            <person name="Georgii-Hemming P."/>
            <person name="Gingeras T.R."/>
            <person name="Gojobori T."/>
            <person name="Green R.E."/>
            <person name="Gustincich S."/>
            <person name="Harbers M."/>
            <person name="Hayashi Y."/>
            <person name="Hensch T.K."/>
            <person name="Hirokawa N."/>
            <person name="Hill D."/>
            <person name="Huminiecki L."/>
            <person name="Iacono M."/>
            <person name="Ikeo K."/>
            <person name="Iwama A."/>
            <person name="Ishikawa T."/>
            <person name="Jakt M."/>
            <person name="Kanapin A."/>
            <person name="Katoh M."/>
            <person name="Kawasawa Y."/>
            <person name="Kelso J."/>
            <person name="Kitamura H."/>
            <person name="Kitano H."/>
            <person name="Kollias G."/>
            <person name="Krishnan S.P."/>
            <person name="Kruger A."/>
            <person name="Kummerfeld S.K."/>
            <person name="Kurochkin I.V."/>
            <person name="Lareau L.F."/>
            <person name="Lazarevic D."/>
            <person name="Lipovich L."/>
            <person name="Liu J."/>
            <person name="Liuni S."/>
            <person name="McWilliam S."/>
            <person name="Madan Babu M."/>
            <person name="Madera M."/>
            <person name="Marchionni L."/>
            <person name="Matsuda H."/>
            <person name="Matsuzawa S."/>
            <person name="Miki H."/>
            <person name="Mignone F."/>
            <person name="Miyake S."/>
            <person name="Morris K."/>
            <person name="Mottagui-Tabar S."/>
            <person name="Mulder N."/>
            <person name="Nakano N."/>
            <person name="Nakauchi H."/>
            <person name="Ng P."/>
            <person name="Nilsson R."/>
            <person name="Nishiguchi S."/>
            <person name="Nishikawa S."/>
            <person name="Nori F."/>
            <person name="Ohara O."/>
            <person name="Okazaki Y."/>
            <person name="Orlando V."/>
            <person name="Pang K.C."/>
            <person name="Pavan W.J."/>
            <person name="Pavesi G."/>
            <person name="Pesole G."/>
            <person name="Petrovsky N."/>
            <person name="Piazza S."/>
            <person name="Reed J."/>
            <person name="Reid J.F."/>
            <person name="Ring B.Z."/>
            <person name="Ringwald M."/>
            <person name="Rost B."/>
            <person name="Ruan Y."/>
            <person name="Salzberg S.L."/>
            <person name="Sandelin A."/>
            <person name="Schneider C."/>
            <person name="Schoenbach C."/>
            <person name="Sekiguchi K."/>
            <person name="Semple C.A."/>
            <person name="Seno S."/>
            <person name="Sessa L."/>
            <person name="Sheng Y."/>
            <person name="Shibata Y."/>
            <person name="Shimada H."/>
            <person name="Shimada K."/>
            <person name="Silva D."/>
            <person name="Sinclair B."/>
            <person name="Sperling S."/>
            <person name="Stupka E."/>
            <person name="Sugiura K."/>
            <person name="Sultana R."/>
            <person name="Takenaka Y."/>
            <person name="Taki K."/>
            <person name="Tammoja K."/>
            <person name="Tan S.L."/>
            <person name="Tang S."/>
            <person name="Taylor M.S."/>
            <person name="Tegner J."/>
            <person name="Teichmann S.A."/>
            <person name="Ueda H.R."/>
            <person name="van Nimwegen E."/>
            <person name="Verardo R."/>
            <person name="Wei C.L."/>
            <person name="Yagi K."/>
            <person name="Yamanishi H."/>
            <person name="Zabarovsky E."/>
            <person name="Zhu S."/>
            <person name="Zimmer A."/>
            <person name="Hide W."/>
            <person name="Bult C."/>
            <person name="Grimmond S.M."/>
            <person name="Teasdale R.D."/>
            <person name="Liu E.T."/>
            <person name="Brusic V."/>
            <person name="Quackenbush J."/>
            <person name="Wahlestedt C."/>
            <person name="Mattick J.S."/>
            <person name="Hume D.A."/>
            <person name="Kai C."/>
            <person name="Sasaki D."/>
            <person name="Tomaru Y."/>
            <person name="Fukuda S."/>
            <person name="Kanamori-Katayama M."/>
            <person name="Suzuki M."/>
            <person name="Aoki J."/>
            <person name="Arakawa T."/>
            <person name="Iida J."/>
            <person name="Imamura K."/>
            <person name="Itoh M."/>
            <person name="Kato T."/>
            <person name="Kawaji H."/>
            <person name="Kawagashira N."/>
            <person name="Kawashima T."/>
            <person name="Kojima M."/>
            <person name="Kondo S."/>
            <person name="Konno H."/>
            <person name="Nakano K."/>
            <person name="Ninomiya N."/>
            <person name="Nishio T."/>
            <person name="Okada M."/>
            <person name="Plessy C."/>
            <person name="Shibata K."/>
            <person name="Shiraki T."/>
            <person name="Suzuki S."/>
            <person name="Tagami M."/>
            <person name="Waki K."/>
            <person name="Watahiki A."/>
            <person name="Okamura-Oho Y."/>
            <person name="Suzuki H."/>
            <person name="Kawai J."/>
            <person name="Hayashizaki Y."/>
        </authorList>
    </citation>
    <scope>NUCLEOTIDE SEQUENCE [LARGE SCALE MRNA] OF 19-199</scope>
    <source>
        <strain>C57BL/6J</strain>
        <tissue>Tongue</tissue>
    </source>
</reference>
<reference key="3">
    <citation type="journal article" date="2010" name="Cell">
        <title>A tissue-specific atlas of mouse protein phosphorylation and expression.</title>
        <authorList>
            <person name="Huttlin E.L."/>
            <person name="Jedrychowski M.P."/>
            <person name="Elias J.E."/>
            <person name="Goswami T."/>
            <person name="Rad R."/>
            <person name="Beausoleil S.A."/>
            <person name="Villen J."/>
            <person name="Haas W."/>
            <person name="Sowa M.E."/>
            <person name="Gygi S.P."/>
        </authorList>
    </citation>
    <scope>IDENTIFICATION BY MASS SPECTROMETRY [LARGE SCALE ANALYSIS]</scope>
    <source>
        <tissue>Brain</tissue>
        <tissue>Brown adipose tissue</tissue>
        <tissue>Heart</tissue>
        <tissue>Kidney</tissue>
        <tissue>Lung</tissue>
        <tissue>Pancreas</tissue>
        <tissue>Spleen</tissue>
        <tissue>Testis</tissue>
    </source>
</reference>